<comment type="function">
    <text evidence="1">Together with its co-chaperonin GroES, plays an essential role in assisting protein folding. The GroEL-GroES system forms a nano-cage that allows encapsulation of the non-native substrate proteins and provides a physical environment optimized to promote and accelerate protein folding.</text>
</comment>
<comment type="catalytic activity">
    <reaction evidence="1">
        <text>ATP + H2O + a folded polypeptide = ADP + phosphate + an unfolded polypeptide.</text>
        <dbReference type="EC" id="5.6.1.7"/>
    </reaction>
</comment>
<comment type="subunit">
    <text evidence="1">Forms a cylinder of 14 subunits composed of two heptameric rings stacked back-to-back. Interacts with the co-chaperonin GroES.</text>
</comment>
<comment type="subcellular location">
    <subcellularLocation>
        <location evidence="1">Plastid</location>
        <location evidence="1">Chloroplast</location>
    </subcellularLocation>
</comment>
<comment type="similarity">
    <text evidence="1">Belongs to the chaperonin (HSP60) family.</text>
</comment>
<name>CH60_PHATC</name>
<proteinExistence type="inferred from homology"/>
<organism>
    <name type="scientific">Phaeodactylum tricornutum (strain CCAP 1055/1)</name>
    <dbReference type="NCBI Taxonomy" id="556484"/>
    <lineage>
        <taxon>Eukaryota</taxon>
        <taxon>Sar</taxon>
        <taxon>Stramenopiles</taxon>
        <taxon>Ochrophyta</taxon>
        <taxon>Bacillariophyta</taxon>
        <taxon>Bacillariophyceae</taxon>
        <taxon>Bacillariophycidae</taxon>
        <taxon>Naviculales</taxon>
        <taxon>Phaeodactylaceae</taxon>
        <taxon>Phaeodactylum</taxon>
    </lineage>
</organism>
<accession>A0T0H6</accession>
<geneLocation type="chloroplast"/>
<sequence>MAKKILYQDNARRALERGMEIMVEAVSVTLGPKGRNVVLEKSYGSPQIVNDGVTIAKEIKLLDHIENTGVSLIRQAASKTNDVAGDGTTTATVLAYAMVKEGLKNVAAGANPISIKLGMEKASQYLVTQINEFAQPVEDIQSIQQVASISAGNDEIIGSLIADALSKVGKEGVISLEEGKGIVTELEITEGMKLEKGFISPYFITNTEKMEVSYDNPYILLTDKRITLVQQDLLPILEQITKTKRPLLIIAEDVEKEALATLILNKLRGIINVVAVRAPGFGELRKQMLEDIAILTGGTVITQDAGLSLDNIQLNLLGQARRIIVNKDSTTIVSDGQTLNEINIRCEQLRKQVNIADTGYEKEKLQDRIAKLSGGIAVIRVGAVTETEMKDKKLRLEDAINATRAAVEEGIVPGGGATLTHLSENLVTWAKNNLKEDELIGAMIISRAILAPLRRIAENAGINGPVIIEKVQQQEFEIGYNAAKNTFGNMYTEGIVDPAKVTRSGLQNATSIASMILTTECIIVDDVKSSNES</sequence>
<protein>
    <recommendedName>
        <fullName evidence="1">Chaperonin GroEL, chloroplastic</fullName>
        <ecNumber evidence="1">5.6.1.7</ecNumber>
    </recommendedName>
    <alternativeName>
        <fullName evidence="1">60 kDa chaperonin</fullName>
    </alternativeName>
    <alternativeName>
        <fullName evidence="1">Chaperonin-60</fullName>
        <shortName evidence="1">Cpn60</shortName>
    </alternativeName>
</protein>
<gene>
    <name evidence="1" type="primary">groEL</name>
    <name evidence="1" type="synonym">groL</name>
</gene>
<feature type="chain" id="PRO_0000275255" description="Chaperonin GroEL, chloroplastic">
    <location>
        <begin position="1"/>
        <end position="533"/>
    </location>
</feature>
<feature type="binding site" evidence="1">
    <location>
        <begin position="29"/>
        <end position="32"/>
    </location>
    <ligand>
        <name>ATP</name>
        <dbReference type="ChEBI" id="CHEBI:30616"/>
    </ligand>
</feature>
<feature type="binding site" evidence="1">
    <location>
        <begin position="86"/>
        <end position="90"/>
    </location>
    <ligand>
        <name>ATP</name>
        <dbReference type="ChEBI" id="CHEBI:30616"/>
    </ligand>
</feature>
<feature type="binding site" evidence="1">
    <location>
        <position position="415"/>
    </location>
    <ligand>
        <name>ATP</name>
        <dbReference type="ChEBI" id="CHEBI:30616"/>
    </ligand>
</feature>
<feature type="binding site" evidence="1">
    <location>
        <begin position="481"/>
        <end position="483"/>
    </location>
    <ligand>
        <name>ATP</name>
        <dbReference type="ChEBI" id="CHEBI:30616"/>
    </ligand>
</feature>
<feature type="binding site" evidence="1">
    <location>
        <position position="497"/>
    </location>
    <ligand>
        <name>ATP</name>
        <dbReference type="ChEBI" id="CHEBI:30616"/>
    </ligand>
</feature>
<reference key="1">
    <citation type="journal article" date="2007" name="Mol. Genet. Genomics">
        <title>Chloroplast genomes of the diatoms Phaeodactylum tricornutum and Thalassiosira pseudonana: comparison with other plastid genomes of the red lineage.</title>
        <authorList>
            <person name="Oudot-Le Secq M.-P."/>
            <person name="Grimwood J."/>
            <person name="Shapiro H."/>
            <person name="Armbrust E.V."/>
            <person name="Bowler C."/>
            <person name="Green B.R."/>
        </authorList>
    </citation>
    <scope>NUCLEOTIDE SEQUENCE [LARGE SCALE GENOMIC DNA]</scope>
    <source>
        <strain>CCAP 1055/1</strain>
    </source>
</reference>
<dbReference type="EC" id="5.6.1.7" evidence="1"/>
<dbReference type="EMBL" id="EF067920">
    <property type="protein sequence ID" value="ABK20674.1"/>
    <property type="molecule type" value="Genomic_DNA"/>
</dbReference>
<dbReference type="RefSeq" id="YP_874451.1">
    <property type="nucleotide sequence ID" value="NC_008588.1"/>
</dbReference>
<dbReference type="SMR" id="A0T0H6"/>
<dbReference type="FunCoup" id="A0T0H6">
    <property type="interactions" value="20"/>
</dbReference>
<dbReference type="STRING" id="556484.A0T0H6"/>
<dbReference type="GeneID" id="4524554"/>
<dbReference type="InParanoid" id="A0T0H6"/>
<dbReference type="Proteomes" id="UP000000759">
    <property type="component" value="Chloroplast"/>
</dbReference>
<dbReference type="GO" id="GO:0009507">
    <property type="term" value="C:chloroplast"/>
    <property type="evidence" value="ECO:0007669"/>
    <property type="project" value="UniProtKB-SubCell"/>
</dbReference>
<dbReference type="GO" id="GO:0005524">
    <property type="term" value="F:ATP binding"/>
    <property type="evidence" value="ECO:0007669"/>
    <property type="project" value="UniProtKB-UniRule"/>
</dbReference>
<dbReference type="GO" id="GO:0140662">
    <property type="term" value="F:ATP-dependent protein folding chaperone"/>
    <property type="evidence" value="ECO:0007669"/>
    <property type="project" value="InterPro"/>
</dbReference>
<dbReference type="GO" id="GO:0016853">
    <property type="term" value="F:isomerase activity"/>
    <property type="evidence" value="ECO:0007669"/>
    <property type="project" value="UniProtKB-KW"/>
</dbReference>
<dbReference type="GO" id="GO:0051082">
    <property type="term" value="F:unfolded protein binding"/>
    <property type="evidence" value="ECO:0007669"/>
    <property type="project" value="UniProtKB-UniRule"/>
</dbReference>
<dbReference type="GO" id="GO:0042026">
    <property type="term" value="P:protein refolding"/>
    <property type="evidence" value="ECO:0007669"/>
    <property type="project" value="UniProtKB-UniRule"/>
</dbReference>
<dbReference type="CDD" id="cd03344">
    <property type="entry name" value="GroEL"/>
    <property type="match status" value="1"/>
</dbReference>
<dbReference type="FunFam" id="3.50.7.10:FF:000001">
    <property type="entry name" value="60 kDa chaperonin"/>
    <property type="match status" value="1"/>
</dbReference>
<dbReference type="Gene3D" id="3.50.7.10">
    <property type="entry name" value="GroEL"/>
    <property type="match status" value="1"/>
</dbReference>
<dbReference type="Gene3D" id="1.10.560.10">
    <property type="entry name" value="GroEL-like equatorial domain"/>
    <property type="match status" value="1"/>
</dbReference>
<dbReference type="Gene3D" id="3.30.260.10">
    <property type="entry name" value="TCP-1-like chaperonin intermediate domain"/>
    <property type="match status" value="1"/>
</dbReference>
<dbReference type="HAMAP" id="MF_00600">
    <property type="entry name" value="CH60"/>
    <property type="match status" value="1"/>
</dbReference>
<dbReference type="InterPro" id="IPR018370">
    <property type="entry name" value="Chaperonin_Cpn60_CS"/>
</dbReference>
<dbReference type="InterPro" id="IPR001844">
    <property type="entry name" value="Cpn60/GroEL"/>
</dbReference>
<dbReference type="InterPro" id="IPR002423">
    <property type="entry name" value="Cpn60/GroEL/TCP-1"/>
</dbReference>
<dbReference type="InterPro" id="IPR027409">
    <property type="entry name" value="GroEL-like_apical_dom_sf"/>
</dbReference>
<dbReference type="InterPro" id="IPR027413">
    <property type="entry name" value="GROEL-like_equatorial_sf"/>
</dbReference>
<dbReference type="InterPro" id="IPR027410">
    <property type="entry name" value="TCP-1-like_intermed_sf"/>
</dbReference>
<dbReference type="NCBIfam" id="TIGR02348">
    <property type="entry name" value="GroEL"/>
    <property type="match status" value="1"/>
</dbReference>
<dbReference type="NCBIfam" id="NF000592">
    <property type="entry name" value="PRK00013.1"/>
    <property type="match status" value="1"/>
</dbReference>
<dbReference type="NCBIfam" id="NF009487">
    <property type="entry name" value="PRK12849.1"/>
    <property type="match status" value="1"/>
</dbReference>
<dbReference type="NCBIfam" id="NF009488">
    <property type="entry name" value="PRK12850.1"/>
    <property type="match status" value="1"/>
</dbReference>
<dbReference type="NCBIfam" id="NF009489">
    <property type="entry name" value="PRK12851.1"/>
    <property type="match status" value="1"/>
</dbReference>
<dbReference type="PANTHER" id="PTHR45633">
    <property type="entry name" value="60 KDA HEAT SHOCK PROTEIN, MITOCHONDRIAL"/>
    <property type="match status" value="1"/>
</dbReference>
<dbReference type="Pfam" id="PF00118">
    <property type="entry name" value="Cpn60_TCP1"/>
    <property type="match status" value="1"/>
</dbReference>
<dbReference type="PRINTS" id="PR00298">
    <property type="entry name" value="CHAPERONIN60"/>
</dbReference>
<dbReference type="SUPFAM" id="SSF52029">
    <property type="entry name" value="GroEL apical domain-like"/>
    <property type="match status" value="1"/>
</dbReference>
<dbReference type="SUPFAM" id="SSF48592">
    <property type="entry name" value="GroEL equatorial domain-like"/>
    <property type="match status" value="1"/>
</dbReference>
<dbReference type="SUPFAM" id="SSF54849">
    <property type="entry name" value="GroEL-intermediate domain like"/>
    <property type="match status" value="1"/>
</dbReference>
<dbReference type="PROSITE" id="PS00296">
    <property type="entry name" value="CHAPERONINS_CPN60"/>
    <property type="match status" value="1"/>
</dbReference>
<keyword id="KW-0067">ATP-binding</keyword>
<keyword id="KW-0143">Chaperone</keyword>
<keyword id="KW-0150">Chloroplast</keyword>
<keyword id="KW-0413">Isomerase</keyword>
<keyword id="KW-0547">Nucleotide-binding</keyword>
<keyword id="KW-0934">Plastid</keyword>
<keyword id="KW-1185">Reference proteome</keyword>
<evidence type="ECO:0000255" key="1">
    <source>
        <dbReference type="HAMAP-Rule" id="MF_00600"/>
    </source>
</evidence>